<feature type="chain" id="PRO_0000030314" description="Nuclear factor NF-kappa-B p105 subunit">
    <location>
        <begin position="1"/>
        <end position="973"/>
    </location>
</feature>
<feature type="chain" id="PRO_0000030315" description="Nuclear factor NF-kappa-B p50 subunit" evidence="1">
    <location>
        <begin position="1"/>
        <end position="483"/>
    </location>
</feature>
<feature type="domain" description="RHD" evidence="4">
    <location>
        <begin position="38"/>
        <end position="245"/>
    </location>
</feature>
<feature type="repeat" description="ANK 1">
    <location>
        <begin position="540"/>
        <end position="570"/>
    </location>
</feature>
<feature type="repeat" description="ANK 2">
    <location>
        <begin position="579"/>
        <end position="608"/>
    </location>
</feature>
<feature type="repeat" description="ANK 3">
    <location>
        <begin position="612"/>
        <end position="641"/>
    </location>
</feature>
<feature type="repeat" description="ANK 4">
    <location>
        <begin position="648"/>
        <end position="677"/>
    </location>
</feature>
<feature type="repeat" description="ANK 5">
    <location>
        <begin position="682"/>
        <end position="711"/>
    </location>
</feature>
<feature type="repeat" description="ANK 6">
    <location>
        <begin position="716"/>
        <end position="745"/>
    </location>
</feature>
<feature type="repeat" description="ANK 7">
    <location>
        <begin position="769"/>
        <end position="799"/>
    </location>
</feature>
<feature type="domain" description="Death">
    <location>
        <begin position="803"/>
        <end position="890"/>
    </location>
</feature>
<feature type="region of interest" description="GRR" evidence="1">
    <location>
        <begin position="371"/>
        <end position="394"/>
    </location>
</feature>
<feature type="region of interest" description="Disordered" evidence="5">
    <location>
        <begin position="434"/>
        <end position="467"/>
    </location>
</feature>
<feature type="region of interest" description="Interaction with CFLAR" evidence="1">
    <location>
        <begin position="435"/>
        <end position="973"/>
    </location>
</feature>
<feature type="region of interest" description="Essential for interaction with HIF1AN" evidence="1">
    <location>
        <begin position="648"/>
        <end position="682"/>
    </location>
</feature>
<feature type="short sequence motif" description="Nuclear localization signal" evidence="3">
    <location>
        <begin position="359"/>
        <end position="364"/>
    </location>
</feature>
<feature type="compositionally biased region" description="Basic and acidic residues" evidence="5">
    <location>
        <begin position="439"/>
        <end position="463"/>
    </location>
</feature>
<feature type="site" description="Cleavage (when cotranslationally processed)" evidence="1">
    <location>
        <begin position="433"/>
        <end position="434"/>
    </location>
</feature>
<feature type="modified residue" description="S-nitrosocysteine; alternate" evidence="1">
    <location>
        <position position="60"/>
    </location>
</feature>
<feature type="modified residue" description="Phosphoserine" evidence="3">
    <location>
        <position position="336"/>
    </location>
</feature>
<feature type="modified residue" description="N6-acetyllysine" evidence="1">
    <location>
        <position position="440"/>
    </location>
</feature>
<feature type="modified residue" description="Phosphoserine" evidence="2">
    <location>
        <position position="449"/>
    </location>
</feature>
<feature type="modified residue" description="(3S)-3-hydroxyasparagine; by HIF1AN" evidence="1">
    <location>
        <position position="676"/>
    </location>
</feature>
<feature type="modified residue" description="Phosphoserine" evidence="6">
    <location>
        <position position="757"/>
    </location>
</feature>
<feature type="modified residue" description="Phosphoserine" evidence="1">
    <location>
        <position position="898"/>
    </location>
</feature>
<feature type="modified residue" description="Phosphoserine; by GSK3-beta; in vitro" evidence="1">
    <location>
        <position position="912"/>
    </location>
</feature>
<feature type="modified residue" description="Phosphoserine" evidence="1">
    <location>
        <position position="928"/>
    </location>
</feature>
<feature type="modified residue" description="Phosphoserine; by IKKB" evidence="1">
    <location>
        <position position="932"/>
    </location>
</feature>
<feature type="modified residue" description="Phosphoserine; by IKKB" evidence="1">
    <location>
        <position position="937"/>
    </location>
</feature>
<feature type="modified residue" description="Phosphoserine" evidence="1">
    <location>
        <position position="942"/>
    </location>
</feature>
<feature type="modified residue" description="Phosphothreonine" evidence="2">
    <location>
        <position position="948"/>
    </location>
</feature>
<feature type="lipid moiety-binding region" description="S-(15-deoxy-Delta12,14-prostaglandin J2-9-yl)cysteine; alternate" evidence="1">
    <location>
        <position position="60"/>
    </location>
</feature>
<feature type="cross-link" description="Glycyl lysine isopeptide (Lys-Gly) (interchain with G-Cter in SUMO2)" evidence="1">
    <location>
        <position position="324"/>
    </location>
</feature>
<comment type="function">
    <text evidence="1">NF-kappa-B is a pleiotropic transcription factor present in almost all cell types and is the endpoint of a series of signal transduction events that are initiated by a vast array of stimuli related to many biological processes such as inflammation, immunity, differentiation, cell growth, tumorigenesis and apoptosis. NF-kappa-B is a homo- or heterodimeric complex formed by the Rel-like domain-containing proteins RELA/p65, RELB, NFKB1/p105, NFKB1/p50, REL and NFKB2/p52 and the heterodimeric p65-p50 complex appears to be most abundant one. The dimers bind at kappa-B sites in the DNA of their target genes and the individual dimers have distinct preferences for different kappa-B sites that they can bind with distinguishable affinity and specificity. Different dimer combinations act as transcriptional activators or repressors, respectively. NF-kappa-B is controlled by various mechanisms of post-translational modification and subcellular compartmentalization as well as by interactions with other cofactors or corepressors. NF-kappa-B complexes are held in the cytoplasm in an inactive state complexed with members of the NF-kappa-B inhibitor (I-kappa-B) family. In a conventional activation pathway, I-kappa-B is phosphorylated by I-kappa-B kinases (IKKs) in response to different activators, subsequently degraded thus liberating the active NF-kappa-B complex which translocates to the nucleus. NF-kappa-B heterodimeric p65-p50 and RelB-p50 complexes are transcriptional activators. The NF-kappa-B p50-p50 homodimer is a transcriptional repressor, but can act as a transcriptional activator when associated with BCL3. NFKB1 appears to have dual functions such as cytoplasmic retention of attached NF-kappa-B proteins by p105 and generation of p50 by a cotranslational processing. The proteasome-mediated process ensures the production of both p50 and p105 and preserves their independent function, although processing of NFKB1/p105 also appears to occur post-translationally. p50 binds to the kappa-B consensus sequence 5'-GGRNNYYCC-3', located in the enhancer region of genes involved in immune response and acute phase reactions. In a complex with MAP3K8, NFKB1/p105 represses MAP3K8-induced MAPK signaling; active MAP3K8 is released by proteasome-dependent degradation of NFKB1/p105.</text>
</comment>
<comment type="function">
    <molecule>Nuclear factor NF-kappa-B p105 subunit</molecule>
    <text evidence="1">P105 is the precursor of the active p50 subunit (Nuclear factor NF-kappa-B p50 subunit) of the nuclear factor NF-kappa-B. Acts as a cytoplasmic retention of attached NF-kappa-B proteins by p105.</text>
</comment>
<comment type="function">
    <molecule>Nuclear factor NF-kappa-B p50 subunit</molecule>
    <text evidence="1">Constitutes the active form, which associates with RELA/p65 to form the NF-kappa-B p65-p50 complex to form a transcription factor. Together with RELA/p65, binds to the kappa-B consensus sequence 5'-GGRNNYYCC-3', located in the enhancer region of genes involved in immune response and acute phase reactions.</text>
</comment>
<comment type="subunit">
    <text evidence="1 2">Component of the NF-kappa-B p65-p50 complex (By similarity). Homodimer; component of the NF-kappa-B p50-p50 complex (By similarity). Component of the NF-kappa-B p105-p50 complex (By similarity). Component of the NF-kappa-B p50-c-Rel complex (By similarity). Component of a complex consisting of the NF-kappa-B p50-p50 homodimer and BCL3 (By similarity). Also interacts with MAP3K8 (By similarity). NF-kappa-B p50 subunit interacts with NCOA3 coactivator, which may coactivate NF-kappa-B dependent expression via its histone acetyltransferase activity (By similarity). Interacts with TSC22D3; this interaction prevents nuclear translocation and DNA-binding (By similarity). Interacts with SPAG9 and UNC5CL (By similarity). NFKB1/p105 interacts with CFLAR; the interaction inhibits p105 processing into p50 (By similarity). NFKB1/p105 forms a ternary complex with MAP3K8 and TNIP2 (By similarity). Interacts with GSK3B; the interaction prevents processing of p105 to p50 (By similarity). NFKB1/p50 interacts with NFKBIE (By similarity). NFKB1/p50 interacts with NFKBIZ. Nuclear factor NF-kappa-B p50 subunit interacts with NFKBID (By similarity). Directly interacts with MEN1 (By similarity). Interacts with HIF1AN (By similarity). Interacts with FEM1A; interaction is direct (By similarity).</text>
</comment>
<comment type="interaction">
    <interactant intactId="EBI-8498561">
        <id>Q63369</id>
    </interactant>
    <interactant intactId="EBI-7204362">
        <id>P47196</id>
        <label>Akt1</label>
    </interactant>
    <organismsDiffer>false</organismsDiffer>
    <experiments>9</experiments>
</comment>
<comment type="interaction">
    <interactant intactId="EBI-8498561">
        <id>Q63369</id>
    </interactant>
    <interactant intactId="EBI-8498730">
        <id>Q99N34</id>
        <label>Dffb</label>
    </interactant>
    <organismsDiffer>false</organismsDiffer>
    <experiments>2</experiments>
</comment>
<comment type="subcellular location">
    <molecule>Nuclear factor NF-kappa-B p105 subunit</molecule>
    <subcellularLocation>
        <location evidence="1">Cytoplasm</location>
    </subcellularLocation>
</comment>
<comment type="subcellular location">
    <molecule>Nuclear factor NF-kappa-B p50 subunit</molecule>
    <subcellularLocation>
        <location evidence="1">Nucleus</location>
    </subcellularLocation>
    <subcellularLocation>
        <location evidence="1">Cytoplasm</location>
    </subcellularLocation>
    <text evidence="1">Association with NFKBIA inhibitor (I-kappa-B), promotes its retention in the cytoplasm in an inactive form. Translocates into the nucleus following NFKBIA degradation.</text>
</comment>
<comment type="domain">
    <text evidence="1">The C-terminus of p105 might be involved in cytoplasmic retention, inhibition of DNA-binding, and transcription activation.</text>
</comment>
<comment type="domain">
    <text evidence="1">Glycine-rich region (GRR) is a critical element in the generation of p50 (Nuclear factor NF-kappa-B p50 subunit) by acting as a proteasomal 'stop signal', which leads to limited proteasomal degradation of the C-terminus, while generating p50.</text>
</comment>
<comment type="PTM">
    <text evidence="1">Generation of the NF-kappa-B p50 (Nuclear factor NF-kappa-B p50 subunit) transcription factor takes place both cotranslationally and post-translationally via non-mutually exclusive mechanisms. A cotranslational processing allows the production of both p50 and p105 (Nuclear factor NF-kappa-B p105 subunit) from a single NFKB1 mRNA. While translation occurs, the particular unfolded structure after the GRR repeat region acts as a substrate for the proteasome, promoting degradation of the C-terminus. The GRR acts as a proteasomal 'stop signal', protecting the region upstream of the GRR from degradation and promoting generation of p50. It is unclear if limited proteasome degradation during cotranslational processing depends on ubiquitination. NF-kappa-B p50 is also generated post-translationally following ubiquitination by the KPC complex, leading to limited processing by the proteasome downstream of the GRR region, thereby generating p50.</text>
</comment>
<comment type="PTM">
    <molecule>Nuclear factor NF-kappa-B p105 subunit</molecule>
    <text evidence="1">Phosphorylation at the C-terminus by IKBKB/IKKB acts as a signal for ubiquitination and promotes either complete degradation or processing to generate the NF-kappa-B p50 (Nuclear factor NF-kappa-B p50 subunit) (By similarity). Phosphorylation at Ser-912 primes p105 for proteolytic processing in response to TNF-alpha stimulation (By similarity). Phosphorylation at Ser-928, Ser-932 and Ser-937 are required for BTRC/BTRCP-mediated ubiquitination and proteolysis (By similarity). Phosphorylation at Ser-932 is also required for ubiquitination by the KPC complex and limited processing to generate NF-kappa-B p50 (Nuclear factor NF-kappa-B p50 subunit) (By similarity).</text>
</comment>
<comment type="PTM">
    <molecule>Nuclear factor NF-kappa-B p105 subunit</molecule>
    <text evidence="1">Polyubiquitinated at multiple Lys residues in the C-terminus. Polyubiquitinated by the SCF(FBXW11) and SCF(BTRC) complexes following phosphorylation at Ser-928, Ser-932 and Ser-937, leading to its complete degradation. In contrast, polyubiquitination by the KPC complex following phosphorylation at Ser-932 leads to limited proteosomal processing and generation of the active NF-kappa-B p50 (Nuclear factor NF-kappa-B p50 subunit).</text>
</comment>
<comment type="PTM">
    <text evidence="1">S-nitrosylation of Cys-60 affects DNA binding.</text>
</comment>
<comment type="PTM">
    <text evidence="1">The covalent modification of cysteine by 15-deoxy-Delta12,14-prostaglandin-J2 is autocatalytic and reversible. It may occur as an alternative to other cysteine modifications, such as S-nitrosylation and S-palmitoylation.</text>
</comment>
<gene>
    <name type="primary">Nfkb1</name>
</gene>
<keyword id="KW-0007">Acetylation</keyword>
<keyword id="KW-0010">Activator</keyword>
<keyword id="KW-0040">ANK repeat</keyword>
<keyword id="KW-0053">Apoptosis</keyword>
<keyword id="KW-0963">Cytoplasm</keyword>
<keyword id="KW-0238">DNA-binding</keyword>
<keyword id="KW-0379">Hydroxylation</keyword>
<keyword id="KW-1017">Isopeptide bond</keyword>
<keyword id="KW-0449">Lipoprotein</keyword>
<keyword id="KW-0539">Nucleus</keyword>
<keyword id="KW-0597">Phosphoprotein</keyword>
<keyword id="KW-1185">Reference proteome</keyword>
<keyword id="KW-0677">Repeat</keyword>
<keyword id="KW-0702">S-nitrosylation</keyword>
<keyword id="KW-0804">Transcription</keyword>
<keyword id="KW-0805">Transcription regulation</keyword>
<keyword id="KW-0832">Ubl conjugation</keyword>
<reference key="1">
    <citation type="journal article" date="2004" name="Nature">
        <title>Genome sequence of the Brown Norway rat yields insights into mammalian evolution.</title>
        <authorList>
            <person name="Gibbs R.A."/>
            <person name="Weinstock G.M."/>
            <person name="Metzker M.L."/>
            <person name="Muzny D.M."/>
            <person name="Sodergren E.J."/>
            <person name="Scherer S."/>
            <person name="Scott G."/>
            <person name="Steffen D."/>
            <person name="Worley K.C."/>
            <person name="Burch P.E."/>
            <person name="Okwuonu G."/>
            <person name="Hines S."/>
            <person name="Lewis L."/>
            <person name="Deramo C."/>
            <person name="Delgado O."/>
            <person name="Dugan-Rocha S."/>
            <person name="Miner G."/>
            <person name="Morgan M."/>
            <person name="Hawes A."/>
            <person name="Gill R."/>
            <person name="Holt R.A."/>
            <person name="Adams M.D."/>
            <person name="Amanatides P.G."/>
            <person name="Baden-Tillson H."/>
            <person name="Barnstead M."/>
            <person name="Chin S."/>
            <person name="Evans C.A."/>
            <person name="Ferriera S."/>
            <person name="Fosler C."/>
            <person name="Glodek A."/>
            <person name="Gu Z."/>
            <person name="Jennings D."/>
            <person name="Kraft C.L."/>
            <person name="Nguyen T."/>
            <person name="Pfannkoch C.M."/>
            <person name="Sitter C."/>
            <person name="Sutton G.G."/>
            <person name="Venter J.C."/>
            <person name="Woodage T."/>
            <person name="Smith D."/>
            <person name="Lee H.-M."/>
            <person name="Gustafson E."/>
            <person name="Cahill P."/>
            <person name="Kana A."/>
            <person name="Doucette-Stamm L."/>
            <person name="Weinstock K."/>
            <person name="Fechtel K."/>
            <person name="Weiss R.B."/>
            <person name="Dunn D.M."/>
            <person name="Green E.D."/>
            <person name="Blakesley R.W."/>
            <person name="Bouffard G.G."/>
            <person name="De Jong P.J."/>
            <person name="Osoegawa K."/>
            <person name="Zhu B."/>
            <person name="Marra M."/>
            <person name="Schein J."/>
            <person name="Bosdet I."/>
            <person name="Fjell C."/>
            <person name="Jones S."/>
            <person name="Krzywinski M."/>
            <person name="Mathewson C."/>
            <person name="Siddiqui A."/>
            <person name="Wye N."/>
            <person name="McPherson J."/>
            <person name="Zhao S."/>
            <person name="Fraser C.M."/>
            <person name="Shetty J."/>
            <person name="Shatsman S."/>
            <person name="Geer K."/>
            <person name="Chen Y."/>
            <person name="Abramzon S."/>
            <person name="Nierman W.C."/>
            <person name="Havlak P.H."/>
            <person name="Chen R."/>
            <person name="Durbin K.J."/>
            <person name="Egan A."/>
            <person name="Ren Y."/>
            <person name="Song X.-Z."/>
            <person name="Li B."/>
            <person name="Liu Y."/>
            <person name="Qin X."/>
            <person name="Cawley S."/>
            <person name="Cooney A.J."/>
            <person name="D'Souza L.M."/>
            <person name="Martin K."/>
            <person name="Wu J.Q."/>
            <person name="Gonzalez-Garay M.L."/>
            <person name="Jackson A.R."/>
            <person name="Kalafus K.J."/>
            <person name="McLeod M.P."/>
            <person name="Milosavljevic A."/>
            <person name="Virk D."/>
            <person name="Volkov A."/>
            <person name="Wheeler D.A."/>
            <person name="Zhang Z."/>
            <person name="Bailey J.A."/>
            <person name="Eichler E.E."/>
            <person name="Tuzun E."/>
            <person name="Birney E."/>
            <person name="Mongin E."/>
            <person name="Ureta-Vidal A."/>
            <person name="Woodwark C."/>
            <person name="Zdobnov E."/>
            <person name="Bork P."/>
            <person name="Suyama M."/>
            <person name="Torrents D."/>
            <person name="Alexandersson M."/>
            <person name="Trask B.J."/>
            <person name="Young J.M."/>
            <person name="Huang H."/>
            <person name="Wang H."/>
            <person name="Xing H."/>
            <person name="Daniels S."/>
            <person name="Gietzen D."/>
            <person name="Schmidt J."/>
            <person name="Stevens K."/>
            <person name="Vitt U."/>
            <person name="Wingrove J."/>
            <person name="Camara F."/>
            <person name="Mar Alba M."/>
            <person name="Abril J.F."/>
            <person name="Guigo R."/>
            <person name="Smit A."/>
            <person name="Dubchak I."/>
            <person name="Rubin E.M."/>
            <person name="Couronne O."/>
            <person name="Poliakov A."/>
            <person name="Huebner N."/>
            <person name="Ganten D."/>
            <person name="Goesele C."/>
            <person name="Hummel O."/>
            <person name="Kreitler T."/>
            <person name="Lee Y.-A."/>
            <person name="Monti J."/>
            <person name="Schulz H."/>
            <person name="Zimdahl H."/>
            <person name="Himmelbauer H."/>
            <person name="Lehrach H."/>
            <person name="Jacob H.J."/>
            <person name="Bromberg S."/>
            <person name="Gullings-Handley J."/>
            <person name="Jensen-Seaman M.I."/>
            <person name="Kwitek A.E."/>
            <person name="Lazar J."/>
            <person name="Pasko D."/>
            <person name="Tonellato P.J."/>
            <person name="Twigger S."/>
            <person name="Ponting C.P."/>
            <person name="Duarte J.M."/>
            <person name="Rice S."/>
            <person name="Goodstadt L."/>
            <person name="Beatson S.A."/>
            <person name="Emes R.D."/>
            <person name="Winter E.E."/>
            <person name="Webber C."/>
            <person name="Brandt P."/>
            <person name="Nyakatura G."/>
            <person name="Adetobi M."/>
            <person name="Chiaromonte F."/>
            <person name="Elnitski L."/>
            <person name="Eswara P."/>
            <person name="Hardison R.C."/>
            <person name="Hou M."/>
            <person name="Kolbe D."/>
            <person name="Makova K."/>
            <person name="Miller W."/>
            <person name="Nekrutenko A."/>
            <person name="Riemer C."/>
            <person name="Schwartz S."/>
            <person name="Taylor J."/>
            <person name="Yang S."/>
            <person name="Zhang Y."/>
            <person name="Lindpaintner K."/>
            <person name="Andrews T.D."/>
            <person name="Caccamo M."/>
            <person name="Clamp M."/>
            <person name="Clarke L."/>
            <person name="Curwen V."/>
            <person name="Durbin R.M."/>
            <person name="Eyras E."/>
            <person name="Searle S.M."/>
            <person name="Cooper G.M."/>
            <person name="Batzoglou S."/>
            <person name="Brudno M."/>
            <person name="Sidow A."/>
            <person name="Stone E.A."/>
            <person name="Payseur B.A."/>
            <person name="Bourque G."/>
            <person name="Lopez-Otin C."/>
            <person name="Puente X.S."/>
            <person name="Chakrabarti K."/>
            <person name="Chatterji S."/>
            <person name="Dewey C."/>
            <person name="Pachter L."/>
            <person name="Bray N."/>
            <person name="Yap V.B."/>
            <person name="Caspi A."/>
            <person name="Tesler G."/>
            <person name="Pevzner P.A."/>
            <person name="Haussler D."/>
            <person name="Roskin K.M."/>
            <person name="Baertsch R."/>
            <person name="Clawson H."/>
            <person name="Furey T.S."/>
            <person name="Hinrichs A.S."/>
            <person name="Karolchik D."/>
            <person name="Kent W.J."/>
            <person name="Rosenbloom K.R."/>
            <person name="Trumbower H."/>
            <person name="Weirauch M."/>
            <person name="Cooper D.N."/>
            <person name="Stenson P.D."/>
            <person name="Ma B."/>
            <person name="Brent M."/>
            <person name="Arumugam M."/>
            <person name="Shteynberg D."/>
            <person name="Copley R.R."/>
            <person name="Taylor M.S."/>
            <person name="Riethman H."/>
            <person name="Mudunuri U."/>
            <person name="Peterson J."/>
            <person name="Guyer M."/>
            <person name="Felsenfeld A."/>
            <person name="Old S."/>
            <person name="Mockrin S."/>
            <person name="Collins F.S."/>
        </authorList>
    </citation>
    <scope>NUCLEOTIDE SEQUENCE [LARGE SCALE GENOMIC DNA]</scope>
    <source>
        <strain>Brown Norway</strain>
    </source>
</reference>
<reference key="2">
    <citation type="journal article" date="1994" name="Endocrinology">
        <title>Cloning of rat Sertoli cell follicle-stimulating hormone primary response complementary deoxyribonucleic acid: regulation of TSC-22 gene expression.</title>
        <authorList>
            <person name="Hamil K.G."/>
            <person name="Hall S.H."/>
        </authorList>
    </citation>
    <scope>NUCLEOTIDE SEQUENCE [MRNA] OF 452-973</scope>
    <source>
        <strain>Sprague-Dawley</strain>
        <tissue>Testis</tissue>
    </source>
</reference>
<reference key="3">
    <citation type="journal article" date="2012" name="Nat. Commun.">
        <title>Quantitative maps of protein phosphorylation sites across 14 different rat organs and tissues.</title>
        <authorList>
            <person name="Lundby A."/>
            <person name="Secher A."/>
            <person name="Lage K."/>
            <person name="Nordsborg N.B."/>
            <person name="Dmytriyev A."/>
            <person name="Lundby C."/>
            <person name="Olsen J.V."/>
        </authorList>
    </citation>
    <scope>PHOSPHORYLATION [LARGE SCALE ANALYSIS] AT SER-757</scope>
    <scope>IDENTIFICATION BY MASS SPECTROMETRY [LARGE SCALE ANALYSIS]</scope>
</reference>
<protein>
    <recommendedName>
        <fullName>Nuclear factor NF-kappa-B p105 subunit</fullName>
    </recommendedName>
    <alternativeName>
        <fullName>DNA-binding factor KBF1</fullName>
    </alternativeName>
    <alternativeName>
        <fullName>EBP-1</fullName>
    </alternativeName>
    <alternativeName>
        <fullName>Nuclear factor of kappa light polypeptide gene enhancer in B-cells 1</fullName>
    </alternativeName>
    <component>
        <recommendedName>
            <fullName>Nuclear factor NF-kappa-B p50 subunit</fullName>
        </recommendedName>
    </component>
</protein>
<proteinExistence type="evidence at protein level"/>
<name>NFKB1_RAT</name>
<dbReference type="EMBL" id="L26267">
    <property type="protein sequence ID" value="AAA20684.1"/>
    <property type="molecule type" value="mRNA"/>
</dbReference>
<dbReference type="PIR" id="I67414">
    <property type="entry name" value="I67414"/>
</dbReference>
<dbReference type="RefSeq" id="NP_001401941.1">
    <property type="nucleotide sequence ID" value="NM_001415012.1"/>
</dbReference>
<dbReference type="RefSeq" id="XP_006233420.1">
    <property type="nucleotide sequence ID" value="XM_006233358.3"/>
</dbReference>
<dbReference type="SMR" id="Q63369"/>
<dbReference type="CORUM" id="Q63369"/>
<dbReference type="FunCoup" id="Q63369">
    <property type="interactions" value="647"/>
</dbReference>
<dbReference type="IntAct" id="Q63369">
    <property type="interactions" value="11"/>
</dbReference>
<dbReference type="MINT" id="Q63369"/>
<dbReference type="STRING" id="10116.ENSRNOP00000028944"/>
<dbReference type="iPTMnet" id="Q63369"/>
<dbReference type="PhosphoSitePlus" id="Q63369"/>
<dbReference type="PaxDb" id="10116-ENSRNOP00000028944"/>
<dbReference type="PeptideAtlas" id="Q63369"/>
<dbReference type="GeneID" id="81736"/>
<dbReference type="AGR" id="RGD:70498"/>
<dbReference type="RGD" id="70498">
    <property type="gene designation" value="Nfkb1"/>
</dbReference>
<dbReference type="VEuPathDB" id="HostDB:ENSRNOG00000023258"/>
<dbReference type="eggNOG" id="KOG0504">
    <property type="taxonomic scope" value="Eukaryota"/>
</dbReference>
<dbReference type="HOGENOM" id="CLU_004343_1_0_1"/>
<dbReference type="InParanoid" id="Q63369"/>
<dbReference type="TreeFam" id="TF325632"/>
<dbReference type="PRO" id="PR:Q63369"/>
<dbReference type="Proteomes" id="UP000002494">
    <property type="component" value="Chromosome 2"/>
</dbReference>
<dbReference type="Bgee" id="ENSRNOG00000023258">
    <property type="expression patterns" value="Expressed in spleen and 19 other cell types or tissues"/>
</dbReference>
<dbReference type="GO" id="GO:0000785">
    <property type="term" value="C:chromatin"/>
    <property type="evidence" value="ECO:0000266"/>
    <property type="project" value="RGD"/>
</dbReference>
<dbReference type="GO" id="GO:0005737">
    <property type="term" value="C:cytoplasm"/>
    <property type="evidence" value="ECO:0000266"/>
    <property type="project" value="RGD"/>
</dbReference>
<dbReference type="GO" id="GO:0005829">
    <property type="term" value="C:cytosol"/>
    <property type="evidence" value="ECO:0000266"/>
    <property type="project" value="RGD"/>
</dbReference>
<dbReference type="GO" id="GO:0033256">
    <property type="term" value="C:I-kappaB/NF-kappaB complex"/>
    <property type="evidence" value="ECO:0000266"/>
    <property type="project" value="RGD"/>
</dbReference>
<dbReference type="GO" id="GO:0035525">
    <property type="term" value="C:NF-kappaB p50/p65 complex"/>
    <property type="evidence" value="ECO:0000266"/>
    <property type="project" value="RGD"/>
</dbReference>
<dbReference type="GO" id="GO:0005634">
    <property type="term" value="C:nucleus"/>
    <property type="evidence" value="ECO:0000266"/>
    <property type="project" value="RGD"/>
</dbReference>
<dbReference type="GO" id="GO:0032991">
    <property type="term" value="C:protein-containing complex"/>
    <property type="evidence" value="ECO:0000314"/>
    <property type="project" value="RGD"/>
</dbReference>
<dbReference type="GO" id="GO:0005667">
    <property type="term" value="C:transcription regulator complex"/>
    <property type="evidence" value="ECO:0000266"/>
    <property type="project" value="RGD"/>
</dbReference>
<dbReference type="GO" id="GO:0042805">
    <property type="term" value="F:actinin binding"/>
    <property type="evidence" value="ECO:0000266"/>
    <property type="project" value="RGD"/>
</dbReference>
<dbReference type="GO" id="GO:0003682">
    <property type="term" value="F:chromatin binding"/>
    <property type="evidence" value="ECO:0000266"/>
    <property type="project" value="RGD"/>
</dbReference>
<dbReference type="GO" id="GO:0003677">
    <property type="term" value="F:DNA binding"/>
    <property type="evidence" value="ECO:0000314"/>
    <property type="project" value="MGI"/>
</dbReference>
<dbReference type="GO" id="GO:0001228">
    <property type="term" value="F:DNA-binding transcription activator activity, RNA polymerase II-specific"/>
    <property type="evidence" value="ECO:0000266"/>
    <property type="project" value="RGD"/>
</dbReference>
<dbReference type="GO" id="GO:0003700">
    <property type="term" value="F:DNA-binding transcription factor activity"/>
    <property type="evidence" value="ECO:0000266"/>
    <property type="project" value="RGD"/>
</dbReference>
<dbReference type="GO" id="GO:0000981">
    <property type="term" value="F:DNA-binding transcription factor activity, RNA polymerase II-specific"/>
    <property type="evidence" value="ECO:0000266"/>
    <property type="project" value="RGD"/>
</dbReference>
<dbReference type="GO" id="GO:0001227">
    <property type="term" value="F:DNA-binding transcription repressor activity, RNA polymerase II-specific"/>
    <property type="evidence" value="ECO:0000266"/>
    <property type="project" value="RGD"/>
</dbReference>
<dbReference type="GO" id="GO:0003690">
    <property type="term" value="F:double-stranded DNA binding"/>
    <property type="evidence" value="ECO:0000314"/>
    <property type="project" value="RGD"/>
</dbReference>
<dbReference type="GO" id="GO:0031072">
    <property type="term" value="F:heat shock protein binding"/>
    <property type="evidence" value="ECO:0000353"/>
    <property type="project" value="RGD"/>
</dbReference>
<dbReference type="GO" id="GO:0042802">
    <property type="term" value="F:identical protein binding"/>
    <property type="evidence" value="ECO:0000353"/>
    <property type="project" value="RGD"/>
</dbReference>
<dbReference type="GO" id="GO:0044877">
    <property type="term" value="F:protein-containing complex binding"/>
    <property type="evidence" value="ECO:0000314"/>
    <property type="project" value="RGD"/>
</dbReference>
<dbReference type="GO" id="GO:0000978">
    <property type="term" value="F:RNA polymerase II cis-regulatory region sequence-specific DNA binding"/>
    <property type="evidence" value="ECO:0000266"/>
    <property type="project" value="RGD"/>
</dbReference>
<dbReference type="GO" id="GO:0000977">
    <property type="term" value="F:RNA polymerase II transcription regulatory region sequence-specific DNA binding"/>
    <property type="evidence" value="ECO:0000266"/>
    <property type="project" value="RGD"/>
</dbReference>
<dbReference type="GO" id="GO:0043565">
    <property type="term" value="F:sequence-specific DNA binding"/>
    <property type="evidence" value="ECO:0000314"/>
    <property type="project" value="RGD"/>
</dbReference>
<dbReference type="GO" id="GO:1990837">
    <property type="term" value="F:sequence-specific double-stranded DNA binding"/>
    <property type="evidence" value="ECO:0000314"/>
    <property type="project" value="RGD"/>
</dbReference>
<dbReference type="GO" id="GO:0000976">
    <property type="term" value="F:transcription cis-regulatory region binding"/>
    <property type="evidence" value="ECO:0000314"/>
    <property type="project" value="RGD"/>
</dbReference>
<dbReference type="GO" id="GO:0003712">
    <property type="term" value="F:transcription coregulator activity"/>
    <property type="evidence" value="ECO:0000266"/>
    <property type="project" value="RGD"/>
</dbReference>
<dbReference type="GO" id="GO:0140367">
    <property type="term" value="P:antibacterial innate immune response"/>
    <property type="evidence" value="ECO:0000266"/>
    <property type="project" value="RGD"/>
</dbReference>
<dbReference type="GO" id="GO:0006915">
    <property type="term" value="P:apoptotic process"/>
    <property type="evidence" value="ECO:0007669"/>
    <property type="project" value="UniProtKB-KW"/>
</dbReference>
<dbReference type="GO" id="GO:0050853">
    <property type="term" value="P:B cell receptor signaling pathway"/>
    <property type="evidence" value="ECO:0000266"/>
    <property type="project" value="RGD"/>
</dbReference>
<dbReference type="GO" id="GO:0007249">
    <property type="term" value="P:canonical NF-kappaB signal transduction"/>
    <property type="evidence" value="ECO:0000266"/>
    <property type="project" value="RGD"/>
</dbReference>
<dbReference type="GO" id="GO:1904385">
    <property type="term" value="P:cellular response to angiotensin"/>
    <property type="evidence" value="ECO:0000266"/>
    <property type="project" value="RGD"/>
</dbReference>
<dbReference type="GO" id="GO:1990416">
    <property type="term" value="P:cellular response to brain-derived neurotrophic factor stimulus"/>
    <property type="evidence" value="ECO:0000314"/>
    <property type="project" value="RGD"/>
</dbReference>
<dbReference type="GO" id="GO:0071322">
    <property type="term" value="P:cellular response to carbohydrate stimulus"/>
    <property type="evidence" value="ECO:0000314"/>
    <property type="project" value="RGD"/>
</dbReference>
<dbReference type="GO" id="GO:0071345">
    <property type="term" value="P:cellular response to cytokine stimulus"/>
    <property type="evidence" value="ECO:0000314"/>
    <property type="project" value="MGI"/>
</dbReference>
<dbReference type="GO" id="GO:1904630">
    <property type="term" value="P:cellular response to diterpene"/>
    <property type="evidence" value="ECO:0000314"/>
    <property type="project" value="RGD"/>
</dbReference>
<dbReference type="GO" id="GO:0071359">
    <property type="term" value="P:cellular response to dsRNA"/>
    <property type="evidence" value="ECO:0000266"/>
    <property type="project" value="RGD"/>
</dbReference>
<dbReference type="GO" id="GO:1904632">
    <property type="term" value="P:cellular response to glucoside"/>
    <property type="evidence" value="ECO:0000314"/>
    <property type="project" value="RGD"/>
</dbReference>
<dbReference type="GO" id="GO:0071347">
    <property type="term" value="P:cellular response to interleukin-1"/>
    <property type="evidence" value="ECO:0000314"/>
    <property type="project" value="RGD"/>
</dbReference>
<dbReference type="GO" id="GO:0097398">
    <property type="term" value="P:cellular response to interleukin-17"/>
    <property type="evidence" value="ECO:0000266"/>
    <property type="project" value="RGD"/>
</dbReference>
<dbReference type="GO" id="GO:0071354">
    <property type="term" value="P:cellular response to interleukin-6"/>
    <property type="evidence" value="ECO:0000266"/>
    <property type="project" value="RGD"/>
</dbReference>
<dbReference type="GO" id="GO:0071222">
    <property type="term" value="P:cellular response to lipopolysaccharide"/>
    <property type="evidence" value="ECO:0000314"/>
    <property type="project" value="RGD"/>
</dbReference>
<dbReference type="GO" id="GO:0071260">
    <property type="term" value="P:cellular response to mechanical stimulus"/>
    <property type="evidence" value="ECO:0000266"/>
    <property type="project" value="RGD"/>
</dbReference>
<dbReference type="GO" id="GO:0071316">
    <property type="term" value="P:cellular response to nicotine"/>
    <property type="evidence" value="ECO:0000266"/>
    <property type="project" value="RGD"/>
</dbReference>
<dbReference type="GO" id="GO:1901653">
    <property type="term" value="P:cellular response to peptide"/>
    <property type="evidence" value="ECO:0000314"/>
    <property type="project" value="RGD"/>
</dbReference>
<dbReference type="GO" id="GO:0071356">
    <property type="term" value="P:cellular response to tumor necrosis factor"/>
    <property type="evidence" value="ECO:0000314"/>
    <property type="project" value="RGD"/>
</dbReference>
<dbReference type="GO" id="GO:0098586">
    <property type="term" value="P:cellular response to virus"/>
    <property type="evidence" value="ECO:0000266"/>
    <property type="project" value="RGD"/>
</dbReference>
<dbReference type="GO" id="GO:0010467">
    <property type="term" value="P:gene expression"/>
    <property type="evidence" value="ECO:0000266"/>
    <property type="project" value="RGD"/>
</dbReference>
<dbReference type="GO" id="GO:0007254">
    <property type="term" value="P:JNK cascade"/>
    <property type="evidence" value="ECO:0000266"/>
    <property type="project" value="RGD"/>
</dbReference>
<dbReference type="GO" id="GO:0060056">
    <property type="term" value="P:mammary gland involution"/>
    <property type="evidence" value="ECO:0000266"/>
    <property type="project" value="RGD"/>
</dbReference>
<dbReference type="GO" id="GO:0000165">
    <property type="term" value="P:MAPK cascade"/>
    <property type="evidence" value="ECO:0000266"/>
    <property type="project" value="RGD"/>
</dbReference>
<dbReference type="GO" id="GO:0043066">
    <property type="term" value="P:negative regulation of apoptotic process"/>
    <property type="evidence" value="ECO:0000315"/>
    <property type="project" value="RGD"/>
</dbReference>
<dbReference type="GO" id="GO:0001818">
    <property type="term" value="P:negative regulation of cytokine production"/>
    <property type="evidence" value="ECO:0000266"/>
    <property type="project" value="RGD"/>
</dbReference>
<dbReference type="GO" id="GO:1900016">
    <property type="term" value="P:negative regulation of cytokine production involved in inflammatory response"/>
    <property type="evidence" value="ECO:0000266"/>
    <property type="project" value="RGD"/>
</dbReference>
<dbReference type="GO" id="GO:0045892">
    <property type="term" value="P:negative regulation of DNA-templated transcription"/>
    <property type="evidence" value="ECO:0000266"/>
    <property type="project" value="RGD"/>
</dbReference>
<dbReference type="GO" id="GO:0010629">
    <property type="term" value="P:negative regulation of gene expression"/>
    <property type="evidence" value="ECO:0000266"/>
    <property type="project" value="RGD"/>
</dbReference>
<dbReference type="GO" id="GO:0050728">
    <property type="term" value="P:negative regulation of inflammatory response"/>
    <property type="evidence" value="ECO:0000266"/>
    <property type="project" value="RGD"/>
</dbReference>
<dbReference type="GO" id="GO:0032695">
    <property type="term" value="P:negative regulation of interleukin-12 production"/>
    <property type="evidence" value="ECO:0000266"/>
    <property type="project" value="RGD"/>
</dbReference>
<dbReference type="GO" id="GO:0000122">
    <property type="term" value="P:negative regulation of transcription by RNA polymerase II"/>
    <property type="evidence" value="ECO:0000266"/>
    <property type="project" value="RGD"/>
</dbReference>
<dbReference type="GO" id="GO:0038061">
    <property type="term" value="P:non-canonical NF-kappaB signal transduction"/>
    <property type="evidence" value="ECO:0000266"/>
    <property type="project" value="RGD"/>
</dbReference>
<dbReference type="GO" id="GO:0090263">
    <property type="term" value="P:positive regulation of canonical Wnt signaling pathway"/>
    <property type="evidence" value="ECO:0000266"/>
    <property type="project" value="RGD"/>
</dbReference>
<dbReference type="GO" id="GO:0010875">
    <property type="term" value="P:positive regulation of cholesterol efflux"/>
    <property type="evidence" value="ECO:0000266"/>
    <property type="project" value="RGD"/>
</dbReference>
<dbReference type="GO" id="GO:0045893">
    <property type="term" value="P:positive regulation of DNA-templated transcription"/>
    <property type="evidence" value="ECO:0000250"/>
    <property type="project" value="UniProtKB"/>
</dbReference>
<dbReference type="GO" id="GO:0010628">
    <property type="term" value="P:positive regulation of gene expression"/>
    <property type="evidence" value="ECO:0000315"/>
    <property type="project" value="RGD"/>
</dbReference>
<dbReference type="GO" id="GO:1900127">
    <property type="term" value="P:positive regulation of hyaluronan biosynthetic process"/>
    <property type="evidence" value="ECO:0000266"/>
    <property type="project" value="RGD"/>
</dbReference>
<dbReference type="GO" id="GO:0010884">
    <property type="term" value="P:positive regulation of lipid storage"/>
    <property type="evidence" value="ECO:0000266"/>
    <property type="project" value="RGD"/>
</dbReference>
<dbReference type="GO" id="GO:0010744">
    <property type="term" value="P:positive regulation of macrophage derived foam cell differentiation"/>
    <property type="evidence" value="ECO:0000266"/>
    <property type="project" value="RGD"/>
</dbReference>
<dbReference type="GO" id="GO:2000630">
    <property type="term" value="P:positive regulation of miRNA metabolic process"/>
    <property type="evidence" value="ECO:0000266"/>
    <property type="project" value="RGD"/>
</dbReference>
<dbReference type="GO" id="GO:0045944">
    <property type="term" value="P:positive regulation of transcription by RNA polymerase II"/>
    <property type="evidence" value="ECO:0000266"/>
    <property type="project" value="RGD"/>
</dbReference>
<dbReference type="GO" id="GO:0060261">
    <property type="term" value="P:positive regulation of transcription initiation by RNA polymerase II"/>
    <property type="evidence" value="ECO:0000266"/>
    <property type="project" value="RGD"/>
</dbReference>
<dbReference type="GO" id="GO:0006357">
    <property type="term" value="P:regulation of transcription by RNA polymerase II"/>
    <property type="evidence" value="ECO:0000266"/>
    <property type="project" value="RGD"/>
</dbReference>
<dbReference type="GO" id="GO:0009617">
    <property type="term" value="P:response to bacterium"/>
    <property type="evidence" value="ECO:0000270"/>
    <property type="project" value="RGD"/>
</dbReference>
<dbReference type="GO" id="GO:0046688">
    <property type="term" value="P:response to copper ion"/>
    <property type="evidence" value="ECO:0000270"/>
    <property type="project" value="RGD"/>
</dbReference>
<dbReference type="GO" id="GO:0045471">
    <property type="term" value="P:response to ethanol"/>
    <property type="evidence" value="ECO:0000270"/>
    <property type="project" value="RGD"/>
</dbReference>
<dbReference type="GO" id="GO:0035994">
    <property type="term" value="P:response to muscle stretch"/>
    <property type="evidence" value="ECO:0000266"/>
    <property type="project" value="RGD"/>
</dbReference>
<dbReference type="GO" id="GO:0006979">
    <property type="term" value="P:response to oxidative stress"/>
    <property type="evidence" value="ECO:0000314"/>
    <property type="project" value="RGD"/>
</dbReference>
<dbReference type="GO" id="GO:0009410">
    <property type="term" value="P:response to xenobiotic stimulus"/>
    <property type="evidence" value="ECO:0000270"/>
    <property type="project" value="RGD"/>
</dbReference>
<dbReference type="GO" id="GO:0023019">
    <property type="term" value="P:signal transduction involved in regulation of gene expression"/>
    <property type="evidence" value="ECO:0000266"/>
    <property type="project" value="RGD"/>
</dbReference>
<dbReference type="CDD" id="cd08797">
    <property type="entry name" value="Death_NFkB1_p105"/>
    <property type="match status" value="1"/>
</dbReference>
<dbReference type="CDD" id="cd01177">
    <property type="entry name" value="IPT_NFkappaB"/>
    <property type="match status" value="1"/>
</dbReference>
<dbReference type="CDD" id="cd07935">
    <property type="entry name" value="RHD-n_NFkB1"/>
    <property type="match status" value="1"/>
</dbReference>
<dbReference type="FunFam" id="2.60.40.10:FF:000046">
    <property type="entry name" value="Nuclear factor NF-kappa-B p105 subunit"/>
    <property type="match status" value="1"/>
</dbReference>
<dbReference type="FunFam" id="1.10.533.10:FF:000018">
    <property type="entry name" value="Nuclear factor NF-kappa-B p105 subunit isoform 1"/>
    <property type="match status" value="1"/>
</dbReference>
<dbReference type="FunFam" id="1.25.40.20:FF:000103">
    <property type="entry name" value="Nuclear factor NF-kappa-B p105 subunit isoform 1"/>
    <property type="match status" value="1"/>
</dbReference>
<dbReference type="FunFam" id="2.60.40.340:FF:000004">
    <property type="entry name" value="Nuclear factor NF-kappa-B p105 subunit isoform 1"/>
    <property type="match status" value="1"/>
</dbReference>
<dbReference type="Gene3D" id="1.25.40.20">
    <property type="entry name" value="Ankyrin repeat-containing domain"/>
    <property type="match status" value="1"/>
</dbReference>
<dbReference type="Gene3D" id="1.10.533.10">
    <property type="entry name" value="Death Domain, Fas"/>
    <property type="match status" value="1"/>
</dbReference>
<dbReference type="Gene3D" id="2.60.40.10">
    <property type="entry name" value="Immunoglobulins"/>
    <property type="match status" value="1"/>
</dbReference>
<dbReference type="Gene3D" id="2.60.40.340">
    <property type="entry name" value="Rel homology domain (RHD), DNA-binding domain"/>
    <property type="match status" value="1"/>
</dbReference>
<dbReference type="InterPro" id="IPR002110">
    <property type="entry name" value="Ankyrin_rpt"/>
</dbReference>
<dbReference type="InterPro" id="IPR036770">
    <property type="entry name" value="Ankyrin_rpt-contain_sf"/>
</dbReference>
<dbReference type="InterPro" id="IPR011029">
    <property type="entry name" value="DEATH-like_dom_sf"/>
</dbReference>
<dbReference type="InterPro" id="IPR000488">
    <property type="entry name" value="Death_dom"/>
</dbReference>
<dbReference type="InterPro" id="IPR013783">
    <property type="entry name" value="Ig-like_fold"/>
</dbReference>
<dbReference type="InterPro" id="IPR014756">
    <property type="entry name" value="Ig_E-set"/>
</dbReference>
<dbReference type="InterPro" id="IPR002909">
    <property type="entry name" value="IPT_dom"/>
</dbReference>
<dbReference type="InterPro" id="IPR033926">
    <property type="entry name" value="IPT_NFkappaB"/>
</dbReference>
<dbReference type="InterPro" id="IPR047096">
    <property type="entry name" value="NF-kB_p105_DD"/>
</dbReference>
<dbReference type="InterPro" id="IPR030503">
    <property type="entry name" value="NF-kB_p105_RHD_N"/>
</dbReference>
<dbReference type="InterPro" id="IPR000451">
    <property type="entry name" value="NFkB/Dor"/>
</dbReference>
<dbReference type="InterPro" id="IPR008967">
    <property type="entry name" value="p53-like_TF_DNA-bd_sf"/>
</dbReference>
<dbReference type="InterPro" id="IPR030492">
    <property type="entry name" value="RHD_CS"/>
</dbReference>
<dbReference type="InterPro" id="IPR032397">
    <property type="entry name" value="RHD_dimer"/>
</dbReference>
<dbReference type="InterPro" id="IPR011539">
    <property type="entry name" value="RHD_DNA_bind_dom"/>
</dbReference>
<dbReference type="InterPro" id="IPR037059">
    <property type="entry name" value="RHD_DNA_bind_dom_sf"/>
</dbReference>
<dbReference type="PANTHER" id="PTHR24169:SF9">
    <property type="entry name" value="NUCLEAR FACTOR NF-KAPPA-B P105 SUBUNIT"/>
    <property type="match status" value="1"/>
</dbReference>
<dbReference type="PANTHER" id="PTHR24169">
    <property type="entry name" value="NUCLEAR FACTOR NF-KAPPA-B PROTEIN"/>
    <property type="match status" value="1"/>
</dbReference>
<dbReference type="Pfam" id="PF00023">
    <property type="entry name" value="Ank"/>
    <property type="match status" value="2"/>
</dbReference>
<dbReference type="Pfam" id="PF12796">
    <property type="entry name" value="Ank_2"/>
    <property type="match status" value="1"/>
</dbReference>
<dbReference type="Pfam" id="PF00531">
    <property type="entry name" value="Death"/>
    <property type="match status" value="1"/>
</dbReference>
<dbReference type="Pfam" id="PF16179">
    <property type="entry name" value="RHD_dimer"/>
    <property type="match status" value="1"/>
</dbReference>
<dbReference type="Pfam" id="PF00554">
    <property type="entry name" value="RHD_DNA_bind"/>
    <property type="match status" value="1"/>
</dbReference>
<dbReference type="PRINTS" id="PR01415">
    <property type="entry name" value="ANKYRIN"/>
</dbReference>
<dbReference type="PRINTS" id="PR00057">
    <property type="entry name" value="NFKBTNSCPFCT"/>
</dbReference>
<dbReference type="SMART" id="SM00248">
    <property type="entry name" value="ANK"/>
    <property type="match status" value="6"/>
</dbReference>
<dbReference type="SMART" id="SM00005">
    <property type="entry name" value="DEATH"/>
    <property type="match status" value="1"/>
</dbReference>
<dbReference type="SMART" id="SM00429">
    <property type="entry name" value="IPT"/>
    <property type="match status" value="1"/>
</dbReference>
<dbReference type="SUPFAM" id="SSF48403">
    <property type="entry name" value="Ankyrin repeat"/>
    <property type="match status" value="1"/>
</dbReference>
<dbReference type="SUPFAM" id="SSF47986">
    <property type="entry name" value="DEATH domain"/>
    <property type="match status" value="1"/>
</dbReference>
<dbReference type="SUPFAM" id="SSF81296">
    <property type="entry name" value="E set domains"/>
    <property type="match status" value="1"/>
</dbReference>
<dbReference type="SUPFAM" id="SSF49417">
    <property type="entry name" value="p53-like transcription factors"/>
    <property type="match status" value="1"/>
</dbReference>
<dbReference type="PROSITE" id="PS50297">
    <property type="entry name" value="ANK_REP_REGION"/>
    <property type="match status" value="1"/>
</dbReference>
<dbReference type="PROSITE" id="PS50088">
    <property type="entry name" value="ANK_REPEAT"/>
    <property type="match status" value="4"/>
</dbReference>
<dbReference type="PROSITE" id="PS01204">
    <property type="entry name" value="REL_1"/>
    <property type="match status" value="1"/>
</dbReference>
<dbReference type="PROSITE" id="PS50254">
    <property type="entry name" value="REL_2"/>
    <property type="match status" value="1"/>
</dbReference>
<evidence type="ECO:0000250" key="1">
    <source>
        <dbReference type="UniProtKB" id="P19838"/>
    </source>
</evidence>
<evidence type="ECO:0000250" key="2">
    <source>
        <dbReference type="UniProtKB" id="P25799"/>
    </source>
</evidence>
<evidence type="ECO:0000255" key="3"/>
<evidence type="ECO:0000255" key="4">
    <source>
        <dbReference type="PROSITE-ProRule" id="PRU00265"/>
    </source>
</evidence>
<evidence type="ECO:0000256" key="5">
    <source>
        <dbReference type="SAM" id="MobiDB-lite"/>
    </source>
</evidence>
<evidence type="ECO:0007744" key="6">
    <source>
    </source>
</evidence>
<sequence length="973" mass="105704">MADDDPFGTGQMFHLNTALTHSIFNAELYSTDIPLSTADGPYLQILEQPKQRGFRFRYVCEGPSHGGLPGASSEKNKKSYPQVKICNYVGPAKVIVQLVTNGKNIHLHAHSLVGKHCEDGICTVTAGPKDMVVGFANLGILHVTKKKVFETLEARMTEACIRGYNPGLLVHSDLAYLQAEGGGDRQLTDREKEIIRQAALQQTKEMDLSVVRLMFTAFLPDSTGSFTRRLEPVVSDAIYDSKAPNASNLKIVRMDRTAGCVTGGEEIYLLCDKVQKDDIQIRFYEEEENGGVWEGFGDFSPTDVHRQFAIVFKTPKYKDVNITKPASVFVQLRRKSDLETSEPKPFLYYPEIKDKEEVQRKRQKLMPNFSDSFGGGSGAGAGGGGMFGSGGGGGGSTGSPGPGYGFPHYGFPAYGGIAFHPGATKSNTGITHGTINTKFKNEPRDCAKSDDREILNPPEKETQGEGPSLFMASTKTEAIAPASTMEDKEEDVGFQDNLFLEKALQLAKRHANALFDYAVTGDVKMLLAVQRHLTAVQDENGDSVLHLAIIHLHAQLVRDLLEVTSGSISDDIINMRNDLYQTPLHLAVITKQEDVVEDLLRVGADLSLLDRWGNSVLHLAAKEGHDKILGVLLKNSKAALLINHPNGEGLNAIHIAVMSNSLSCLQLLVAAGAEVNAQEQKSGRTALHLAVEYDNISLAGCLLLEGDALVDSTTYDGTTPLHIAAGRGSTRLAALLKAAGADPLVENFEPLYDLDDSWEKAGEDEGVVPGTTPLDMAANWQVFDILNGKPYEPVFTSDDILPQGDIKQLTEDTRLQLCKLLEIPDPDKNWATLAQKLGLGILNNAFRLSPAPSKTLMDNYEVSGGTIKELVEALRQMGYTEAIEVIQAAFRTPETTASSPVTTAQAHLLPLSSSSTRQHIDELRDNDSVCDSGVETSFRKLSFSESLTGDGPLLSLNKMPHNYGQDGPIEGKI</sequence>
<accession>Q63369</accession>
<accession>F1LQH2</accession>
<organism>
    <name type="scientific">Rattus norvegicus</name>
    <name type="common">Rat</name>
    <dbReference type="NCBI Taxonomy" id="10116"/>
    <lineage>
        <taxon>Eukaryota</taxon>
        <taxon>Metazoa</taxon>
        <taxon>Chordata</taxon>
        <taxon>Craniata</taxon>
        <taxon>Vertebrata</taxon>
        <taxon>Euteleostomi</taxon>
        <taxon>Mammalia</taxon>
        <taxon>Eutheria</taxon>
        <taxon>Euarchontoglires</taxon>
        <taxon>Glires</taxon>
        <taxon>Rodentia</taxon>
        <taxon>Myomorpha</taxon>
        <taxon>Muroidea</taxon>
        <taxon>Muridae</taxon>
        <taxon>Murinae</taxon>
        <taxon>Rattus</taxon>
    </lineage>
</organism>